<accession>Q8Y3B0</accession>
<keyword id="KW-0378">Hydrolase</keyword>
<keyword id="KW-0408">Iron</keyword>
<keyword id="KW-0479">Metal-binding</keyword>
<keyword id="KW-0648">Protein biosynthesis</keyword>
<keyword id="KW-1185">Reference proteome</keyword>
<evidence type="ECO:0000255" key="1">
    <source>
        <dbReference type="HAMAP-Rule" id="MF_00163"/>
    </source>
</evidence>
<proteinExistence type="inferred from homology"/>
<name>DEF1_RALN1</name>
<organism>
    <name type="scientific">Ralstonia nicotianae (strain ATCC BAA-1114 / GMI1000)</name>
    <name type="common">Ralstonia solanacearum</name>
    <dbReference type="NCBI Taxonomy" id="267608"/>
    <lineage>
        <taxon>Bacteria</taxon>
        <taxon>Pseudomonadati</taxon>
        <taxon>Pseudomonadota</taxon>
        <taxon>Betaproteobacteria</taxon>
        <taxon>Burkholderiales</taxon>
        <taxon>Burkholderiaceae</taxon>
        <taxon>Ralstonia</taxon>
        <taxon>Ralstonia solanacearum species complex</taxon>
    </lineage>
</organism>
<dbReference type="EC" id="3.5.1.88" evidence="1"/>
<dbReference type="EMBL" id="AL646052">
    <property type="protein sequence ID" value="CAD13598.1"/>
    <property type="molecule type" value="Genomic_DNA"/>
</dbReference>
<dbReference type="SMR" id="Q8Y3B0"/>
<dbReference type="STRING" id="267608.RSc0070"/>
<dbReference type="EnsemblBacteria" id="CAD13598">
    <property type="protein sequence ID" value="CAD13598"/>
    <property type="gene ID" value="RSc0070"/>
</dbReference>
<dbReference type="KEGG" id="rso:RSc0070"/>
<dbReference type="eggNOG" id="COG0242">
    <property type="taxonomic scope" value="Bacteria"/>
</dbReference>
<dbReference type="HOGENOM" id="CLU_061901_2_1_4"/>
<dbReference type="Proteomes" id="UP000001436">
    <property type="component" value="Chromosome"/>
</dbReference>
<dbReference type="GO" id="GO:0046872">
    <property type="term" value="F:metal ion binding"/>
    <property type="evidence" value="ECO:0007669"/>
    <property type="project" value="UniProtKB-KW"/>
</dbReference>
<dbReference type="GO" id="GO:0042586">
    <property type="term" value="F:peptide deformylase activity"/>
    <property type="evidence" value="ECO:0007669"/>
    <property type="project" value="UniProtKB-UniRule"/>
</dbReference>
<dbReference type="GO" id="GO:0043686">
    <property type="term" value="P:co-translational protein modification"/>
    <property type="evidence" value="ECO:0007669"/>
    <property type="project" value="TreeGrafter"/>
</dbReference>
<dbReference type="GO" id="GO:0006412">
    <property type="term" value="P:translation"/>
    <property type="evidence" value="ECO:0007669"/>
    <property type="project" value="UniProtKB-UniRule"/>
</dbReference>
<dbReference type="CDD" id="cd00487">
    <property type="entry name" value="Pep_deformylase"/>
    <property type="match status" value="1"/>
</dbReference>
<dbReference type="FunFam" id="3.90.45.10:FF:000001">
    <property type="entry name" value="Peptide deformylase"/>
    <property type="match status" value="1"/>
</dbReference>
<dbReference type="Gene3D" id="3.90.45.10">
    <property type="entry name" value="Peptide deformylase"/>
    <property type="match status" value="1"/>
</dbReference>
<dbReference type="HAMAP" id="MF_00163">
    <property type="entry name" value="Pep_deformylase"/>
    <property type="match status" value="1"/>
</dbReference>
<dbReference type="InterPro" id="IPR023635">
    <property type="entry name" value="Peptide_deformylase"/>
</dbReference>
<dbReference type="InterPro" id="IPR036821">
    <property type="entry name" value="Peptide_deformylase_sf"/>
</dbReference>
<dbReference type="NCBIfam" id="TIGR00079">
    <property type="entry name" value="pept_deformyl"/>
    <property type="match status" value="1"/>
</dbReference>
<dbReference type="NCBIfam" id="NF001159">
    <property type="entry name" value="PRK00150.1-3"/>
    <property type="match status" value="1"/>
</dbReference>
<dbReference type="PANTHER" id="PTHR10458">
    <property type="entry name" value="PEPTIDE DEFORMYLASE"/>
    <property type="match status" value="1"/>
</dbReference>
<dbReference type="PANTHER" id="PTHR10458:SF22">
    <property type="entry name" value="PEPTIDE DEFORMYLASE"/>
    <property type="match status" value="1"/>
</dbReference>
<dbReference type="Pfam" id="PF01327">
    <property type="entry name" value="Pep_deformylase"/>
    <property type="match status" value="1"/>
</dbReference>
<dbReference type="PIRSF" id="PIRSF004749">
    <property type="entry name" value="Pep_def"/>
    <property type="match status" value="1"/>
</dbReference>
<dbReference type="PRINTS" id="PR01576">
    <property type="entry name" value="PDEFORMYLASE"/>
</dbReference>
<dbReference type="SUPFAM" id="SSF56420">
    <property type="entry name" value="Peptide deformylase"/>
    <property type="match status" value="1"/>
</dbReference>
<comment type="function">
    <text evidence="1">Removes the formyl group from the N-terminal Met of newly synthesized proteins. Requires at least a dipeptide for an efficient rate of reaction. N-terminal L-methionine is a prerequisite for activity but the enzyme has broad specificity at other positions.</text>
</comment>
<comment type="catalytic activity">
    <reaction evidence="1">
        <text>N-terminal N-formyl-L-methionyl-[peptide] + H2O = N-terminal L-methionyl-[peptide] + formate</text>
        <dbReference type="Rhea" id="RHEA:24420"/>
        <dbReference type="Rhea" id="RHEA-COMP:10639"/>
        <dbReference type="Rhea" id="RHEA-COMP:10640"/>
        <dbReference type="ChEBI" id="CHEBI:15377"/>
        <dbReference type="ChEBI" id="CHEBI:15740"/>
        <dbReference type="ChEBI" id="CHEBI:49298"/>
        <dbReference type="ChEBI" id="CHEBI:64731"/>
        <dbReference type="EC" id="3.5.1.88"/>
    </reaction>
</comment>
<comment type="cofactor">
    <cofactor evidence="1">
        <name>Fe(2+)</name>
        <dbReference type="ChEBI" id="CHEBI:29033"/>
    </cofactor>
    <text evidence="1">Binds 1 Fe(2+) ion.</text>
</comment>
<comment type="similarity">
    <text evidence="1">Belongs to the polypeptide deformylase family.</text>
</comment>
<sequence length="169" mass="19425">MALLNILQYPDPRLHKVAKPVAVVDDRIRKLVADMAETMYDAPGIGLAATQVDVHERVITIDVSESRDELRVFINPEIVWASEARKVWDEGCLSVPDIYDKVERPDRVRVRALNEKGESFELETDGLLAVCIQHEMDHLMGKVFVEYLSPLKQNRIKIKLKKHQLERAR</sequence>
<reference key="1">
    <citation type="journal article" date="2002" name="Nature">
        <title>Genome sequence of the plant pathogen Ralstonia solanacearum.</title>
        <authorList>
            <person name="Salanoubat M."/>
            <person name="Genin S."/>
            <person name="Artiguenave F."/>
            <person name="Gouzy J."/>
            <person name="Mangenot S."/>
            <person name="Arlat M."/>
            <person name="Billault A."/>
            <person name="Brottier P."/>
            <person name="Camus J.-C."/>
            <person name="Cattolico L."/>
            <person name="Chandler M."/>
            <person name="Choisne N."/>
            <person name="Claudel-Renard C."/>
            <person name="Cunnac S."/>
            <person name="Demange N."/>
            <person name="Gaspin C."/>
            <person name="Lavie M."/>
            <person name="Moisan A."/>
            <person name="Robert C."/>
            <person name="Saurin W."/>
            <person name="Schiex T."/>
            <person name="Siguier P."/>
            <person name="Thebault P."/>
            <person name="Whalen M."/>
            <person name="Wincker P."/>
            <person name="Levy M."/>
            <person name="Weissenbach J."/>
            <person name="Boucher C.A."/>
        </authorList>
    </citation>
    <scope>NUCLEOTIDE SEQUENCE [LARGE SCALE GENOMIC DNA]</scope>
    <source>
        <strain>ATCC BAA-1114 / GMI1000</strain>
    </source>
</reference>
<feature type="chain" id="PRO_0000082824" description="Peptide deformylase 1">
    <location>
        <begin position="1"/>
        <end position="169"/>
    </location>
</feature>
<feature type="active site" evidence="1">
    <location>
        <position position="135"/>
    </location>
</feature>
<feature type="binding site" evidence="1">
    <location>
        <position position="92"/>
    </location>
    <ligand>
        <name>Fe cation</name>
        <dbReference type="ChEBI" id="CHEBI:24875"/>
    </ligand>
</feature>
<feature type="binding site" evidence="1">
    <location>
        <position position="134"/>
    </location>
    <ligand>
        <name>Fe cation</name>
        <dbReference type="ChEBI" id="CHEBI:24875"/>
    </ligand>
</feature>
<feature type="binding site" evidence="1">
    <location>
        <position position="138"/>
    </location>
    <ligand>
        <name>Fe cation</name>
        <dbReference type="ChEBI" id="CHEBI:24875"/>
    </ligand>
</feature>
<protein>
    <recommendedName>
        <fullName evidence="1">Peptide deformylase 1</fullName>
        <shortName evidence="1">PDF 1</shortName>
        <ecNumber evidence="1">3.5.1.88</ecNumber>
    </recommendedName>
    <alternativeName>
        <fullName evidence="1">Polypeptide deformylase 1</fullName>
    </alternativeName>
</protein>
<gene>
    <name evidence="1" type="primary">def1</name>
    <name type="ordered locus">RSc0070</name>
    <name type="ORF">RS02248</name>
</gene>